<reference key="1">
    <citation type="journal article" date="2006" name="Appl. Environ. Microbiol.">
        <title>Genome sequence of the chemolithoautotrophic nitrite-oxidizing bacterium Nitrobacter winogradskyi Nb-255.</title>
        <authorList>
            <person name="Starkenburg S.R."/>
            <person name="Chain P.S.G."/>
            <person name="Sayavedra-Soto L.A."/>
            <person name="Hauser L."/>
            <person name="Land M.L."/>
            <person name="Larimer F.W."/>
            <person name="Malfatti S.A."/>
            <person name="Klotz M.G."/>
            <person name="Bottomley P.J."/>
            <person name="Arp D.J."/>
            <person name="Hickey W.J."/>
        </authorList>
    </citation>
    <scope>NUCLEOTIDE SEQUENCE [LARGE SCALE GENOMIC DNA]</scope>
    <source>
        <strain>ATCC 25391 / DSM 10237 / CIP 104748 / NCIMB 11846 / Nb-255</strain>
    </source>
</reference>
<proteinExistence type="inferred from homology"/>
<feature type="chain" id="PRO_1000023237" description="Thymidylate kinase">
    <location>
        <begin position="1"/>
        <end position="230"/>
    </location>
</feature>
<feature type="binding site" evidence="1">
    <location>
        <begin position="20"/>
        <end position="27"/>
    </location>
    <ligand>
        <name>ATP</name>
        <dbReference type="ChEBI" id="CHEBI:30616"/>
    </ligand>
</feature>
<gene>
    <name evidence="1" type="primary">tmk</name>
    <name type="ordered locus">Nwi_1464</name>
</gene>
<keyword id="KW-0067">ATP-binding</keyword>
<keyword id="KW-0418">Kinase</keyword>
<keyword id="KW-0545">Nucleotide biosynthesis</keyword>
<keyword id="KW-0547">Nucleotide-binding</keyword>
<keyword id="KW-1185">Reference proteome</keyword>
<keyword id="KW-0808">Transferase</keyword>
<accession>Q3SSL6</accession>
<dbReference type="EC" id="2.7.4.9" evidence="1"/>
<dbReference type="EMBL" id="CP000115">
    <property type="protein sequence ID" value="ABA04725.1"/>
    <property type="molecule type" value="Genomic_DNA"/>
</dbReference>
<dbReference type="RefSeq" id="WP_011314732.1">
    <property type="nucleotide sequence ID" value="NC_007406.1"/>
</dbReference>
<dbReference type="SMR" id="Q3SSL6"/>
<dbReference type="STRING" id="323098.Nwi_1464"/>
<dbReference type="KEGG" id="nwi:Nwi_1464"/>
<dbReference type="eggNOG" id="COG0125">
    <property type="taxonomic scope" value="Bacteria"/>
</dbReference>
<dbReference type="HOGENOM" id="CLU_049131_0_0_5"/>
<dbReference type="OrthoDB" id="9774907at2"/>
<dbReference type="Proteomes" id="UP000002531">
    <property type="component" value="Chromosome"/>
</dbReference>
<dbReference type="GO" id="GO:0005829">
    <property type="term" value="C:cytosol"/>
    <property type="evidence" value="ECO:0007669"/>
    <property type="project" value="TreeGrafter"/>
</dbReference>
<dbReference type="GO" id="GO:0005524">
    <property type="term" value="F:ATP binding"/>
    <property type="evidence" value="ECO:0007669"/>
    <property type="project" value="UniProtKB-UniRule"/>
</dbReference>
<dbReference type="GO" id="GO:0004798">
    <property type="term" value="F:dTMP kinase activity"/>
    <property type="evidence" value="ECO:0007669"/>
    <property type="project" value="UniProtKB-UniRule"/>
</dbReference>
<dbReference type="GO" id="GO:0006233">
    <property type="term" value="P:dTDP biosynthetic process"/>
    <property type="evidence" value="ECO:0007669"/>
    <property type="project" value="InterPro"/>
</dbReference>
<dbReference type="GO" id="GO:0006235">
    <property type="term" value="P:dTTP biosynthetic process"/>
    <property type="evidence" value="ECO:0007669"/>
    <property type="project" value="UniProtKB-UniRule"/>
</dbReference>
<dbReference type="GO" id="GO:0006227">
    <property type="term" value="P:dUDP biosynthetic process"/>
    <property type="evidence" value="ECO:0007669"/>
    <property type="project" value="TreeGrafter"/>
</dbReference>
<dbReference type="CDD" id="cd01672">
    <property type="entry name" value="TMPK"/>
    <property type="match status" value="1"/>
</dbReference>
<dbReference type="FunFam" id="3.40.50.300:FF:000225">
    <property type="entry name" value="Thymidylate kinase"/>
    <property type="match status" value="1"/>
</dbReference>
<dbReference type="Gene3D" id="3.40.50.300">
    <property type="entry name" value="P-loop containing nucleotide triphosphate hydrolases"/>
    <property type="match status" value="1"/>
</dbReference>
<dbReference type="HAMAP" id="MF_00165">
    <property type="entry name" value="Thymidylate_kinase"/>
    <property type="match status" value="1"/>
</dbReference>
<dbReference type="InterPro" id="IPR027417">
    <property type="entry name" value="P-loop_NTPase"/>
</dbReference>
<dbReference type="InterPro" id="IPR039430">
    <property type="entry name" value="Thymidylate_kin-like_dom"/>
</dbReference>
<dbReference type="InterPro" id="IPR018095">
    <property type="entry name" value="Thymidylate_kin_CS"/>
</dbReference>
<dbReference type="InterPro" id="IPR018094">
    <property type="entry name" value="Thymidylate_kinase"/>
</dbReference>
<dbReference type="NCBIfam" id="TIGR00041">
    <property type="entry name" value="DTMP_kinase"/>
    <property type="match status" value="1"/>
</dbReference>
<dbReference type="PANTHER" id="PTHR10344">
    <property type="entry name" value="THYMIDYLATE KINASE"/>
    <property type="match status" value="1"/>
</dbReference>
<dbReference type="PANTHER" id="PTHR10344:SF4">
    <property type="entry name" value="UMP-CMP KINASE 2, MITOCHONDRIAL"/>
    <property type="match status" value="1"/>
</dbReference>
<dbReference type="Pfam" id="PF02223">
    <property type="entry name" value="Thymidylate_kin"/>
    <property type="match status" value="1"/>
</dbReference>
<dbReference type="SUPFAM" id="SSF52540">
    <property type="entry name" value="P-loop containing nucleoside triphosphate hydrolases"/>
    <property type="match status" value="1"/>
</dbReference>
<dbReference type="PROSITE" id="PS01331">
    <property type="entry name" value="THYMIDYLATE_KINASE"/>
    <property type="match status" value="1"/>
</dbReference>
<evidence type="ECO:0000255" key="1">
    <source>
        <dbReference type="HAMAP-Rule" id="MF_00165"/>
    </source>
</evidence>
<name>KTHY_NITWN</name>
<comment type="function">
    <text evidence="1">Phosphorylation of dTMP to form dTDP in both de novo and salvage pathways of dTTP synthesis.</text>
</comment>
<comment type="catalytic activity">
    <reaction evidence="1">
        <text>dTMP + ATP = dTDP + ADP</text>
        <dbReference type="Rhea" id="RHEA:13517"/>
        <dbReference type="ChEBI" id="CHEBI:30616"/>
        <dbReference type="ChEBI" id="CHEBI:58369"/>
        <dbReference type="ChEBI" id="CHEBI:63528"/>
        <dbReference type="ChEBI" id="CHEBI:456216"/>
        <dbReference type="EC" id="2.7.4.9"/>
    </reaction>
</comment>
<comment type="similarity">
    <text evidence="1">Belongs to the thymidylate kinase family.</text>
</comment>
<protein>
    <recommendedName>
        <fullName evidence="1">Thymidylate kinase</fullName>
        <ecNumber evidence="1">2.7.4.9</ecNumber>
    </recommendedName>
    <alternativeName>
        <fullName evidence="1">dTMP kinase</fullName>
    </alternativeName>
</protein>
<organism>
    <name type="scientific">Nitrobacter winogradskyi (strain ATCC 25391 / DSM 10237 / CIP 104748 / NCIMB 11846 / Nb-255)</name>
    <dbReference type="NCBI Taxonomy" id="323098"/>
    <lineage>
        <taxon>Bacteria</taxon>
        <taxon>Pseudomonadati</taxon>
        <taxon>Pseudomonadota</taxon>
        <taxon>Alphaproteobacteria</taxon>
        <taxon>Hyphomicrobiales</taxon>
        <taxon>Nitrobacteraceae</taxon>
        <taxon>Nitrobacter</taxon>
    </lineage>
</organism>
<sequence length="230" mass="24575">MAQATPKADSQRGRFITFEGGEGSGKSTQIRILAERLQAAKLRAIVTREPGGSPGAEIIRHLVLSGVGKLLGADAETLLFAAARDDHVHTVIKPALEQGIWVLCDRFADSTRVYQGQLGNVLPGVLNAMERVTIGDLKPDLTVILDVPVEVGLQRAAARRGSGAPDRFEAEDIAFHRKLRDAYRAIAASDPQRCVVIDADADLDAVAARVWAALHDRALTADAATKASRA</sequence>